<comment type="subcellular location">
    <subcellularLocation>
        <location evidence="1">Cell membrane</location>
        <topology evidence="1">Multi-pass membrane protein</topology>
    </subcellularLocation>
</comment>
<comment type="similarity">
    <text evidence="1">Belongs to the UPF0391 family.</text>
</comment>
<organism>
    <name type="scientific">Acinetobacter baumannii (strain AB307-0294)</name>
    <dbReference type="NCBI Taxonomy" id="557600"/>
    <lineage>
        <taxon>Bacteria</taxon>
        <taxon>Pseudomonadati</taxon>
        <taxon>Pseudomonadota</taxon>
        <taxon>Gammaproteobacteria</taxon>
        <taxon>Moraxellales</taxon>
        <taxon>Moraxellaceae</taxon>
        <taxon>Acinetobacter</taxon>
        <taxon>Acinetobacter calcoaceticus/baumannii complex</taxon>
    </lineage>
</organism>
<sequence>MFRWAIIFAVIALIASLLGFGGVAGLSKDFAVILLVIAVILAVIGFISRGRT</sequence>
<protein>
    <recommendedName>
        <fullName evidence="1">UPF0391 membrane protein ABBFA_000052</fullName>
    </recommendedName>
</protein>
<feature type="chain" id="PRO_1000143698" description="UPF0391 membrane protein ABBFA_000052">
    <location>
        <begin position="1"/>
        <end position="52"/>
    </location>
</feature>
<feature type="transmembrane region" description="Helical" evidence="1">
    <location>
        <begin position="6"/>
        <end position="26"/>
    </location>
</feature>
<feature type="transmembrane region" description="Helical" evidence="1">
    <location>
        <begin position="30"/>
        <end position="50"/>
    </location>
</feature>
<reference key="1">
    <citation type="journal article" date="2008" name="J. Bacteriol.">
        <title>Comparative genome sequence analysis of multidrug-resistant Acinetobacter baumannii.</title>
        <authorList>
            <person name="Adams M.D."/>
            <person name="Goglin K."/>
            <person name="Molyneaux N."/>
            <person name="Hujer K.M."/>
            <person name="Lavender H."/>
            <person name="Jamison J.J."/>
            <person name="MacDonald I.J."/>
            <person name="Martin K.M."/>
            <person name="Russo T."/>
            <person name="Campagnari A.A."/>
            <person name="Hujer A.M."/>
            <person name="Bonomo R.A."/>
            <person name="Gill S.R."/>
        </authorList>
    </citation>
    <scope>NUCLEOTIDE SEQUENCE [LARGE SCALE GENOMIC DNA]</scope>
    <source>
        <strain>AB307-0294</strain>
    </source>
</reference>
<name>Y052_ACIB3</name>
<dbReference type="EMBL" id="CP001172">
    <property type="protein sequence ID" value="ACJ56930.1"/>
    <property type="molecule type" value="Genomic_DNA"/>
</dbReference>
<dbReference type="RefSeq" id="WP_000490267.1">
    <property type="nucleotide sequence ID" value="NZ_CP001172.1"/>
</dbReference>
<dbReference type="HOGENOM" id="CLU_187346_2_0_6"/>
<dbReference type="Proteomes" id="UP000006924">
    <property type="component" value="Chromosome"/>
</dbReference>
<dbReference type="GO" id="GO:0005886">
    <property type="term" value="C:plasma membrane"/>
    <property type="evidence" value="ECO:0007669"/>
    <property type="project" value="UniProtKB-SubCell"/>
</dbReference>
<dbReference type="HAMAP" id="MF_01361">
    <property type="entry name" value="UPF0391"/>
    <property type="match status" value="1"/>
</dbReference>
<dbReference type="InterPro" id="IPR009760">
    <property type="entry name" value="DUF1328"/>
</dbReference>
<dbReference type="NCBIfam" id="NF010227">
    <property type="entry name" value="PRK13682.1-2"/>
    <property type="match status" value="1"/>
</dbReference>
<dbReference type="NCBIfam" id="NF010229">
    <property type="entry name" value="PRK13682.1-4"/>
    <property type="match status" value="1"/>
</dbReference>
<dbReference type="Pfam" id="PF07043">
    <property type="entry name" value="DUF1328"/>
    <property type="match status" value="1"/>
</dbReference>
<dbReference type="PIRSF" id="PIRSF036466">
    <property type="entry name" value="UCP036466"/>
    <property type="match status" value="1"/>
</dbReference>
<evidence type="ECO:0000255" key="1">
    <source>
        <dbReference type="HAMAP-Rule" id="MF_01361"/>
    </source>
</evidence>
<keyword id="KW-1003">Cell membrane</keyword>
<keyword id="KW-0472">Membrane</keyword>
<keyword id="KW-0812">Transmembrane</keyword>
<keyword id="KW-1133">Transmembrane helix</keyword>
<proteinExistence type="inferred from homology"/>
<gene>
    <name type="ordered locus">ABBFA_000052</name>
</gene>
<accession>B7GV24</accession>